<dbReference type="EMBL" id="CP001628">
    <property type="protein sequence ID" value="ACS31193.1"/>
    <property type="molecule type" value="Genomic_DNA"/>
</dbReference>
<dbReference type="RefSeq" id="WP_002857487.1">
    <property type="nucleotide sequence ID" value="NZ_WBMF01000001.1"/>
</dbReference>
<dbReference type="SMR" id="C5CC52"/>
<dbReference type="STRING" id="465515.Mlut_17060"/>
<dbReference type="EnsemblBacteria" id="ACS31193">
    <property type="protein sequence ID" value="ACS31193"/>
    <property type="gene ID" value="Mlut_17060"/>
</dbReference>
<dbReference type="GeneID" id="93364280"/>
<dbReference type="KEGG" id="mlu:Mlut_17060"/>
<dbReference type="eggNOG" id="COG0093">
    <property type="taxonomic scope" value="Bacteria"/>
</dbReference>
<dbReference type="HOGENOM" id="CLU_095071_2_1_11"/>
<dbReference type="Proteomes" id="UP000000738">
    <property type="component" value="Chromosome"/>
</dbReference>
<dbReference type="GO" id="GO:0022625">
    <property type="term" value="C:cytosolic large ribosomal subunit"/>
    <property type="evidence" value="ECO:0007669"/>
    <property type="project" value="TreeGrafter"/>
</dbReference>
<dbReference type="GO" id="GO:0070180">
    <property type="term" value="F:large ribosomal subunit rRNA binding"/>
    <property type="evidence" value="ECO:0007669"/>
    <property type="project" value="TreeGrafter"/>
</dbReference>
<dbReference type="GO" id="GO:0003735">
    <property type="term" value="F:structural constituent of ribosome"/>
    <property type="evidence" value="ECO:0007669"/>
    <property type="project" value="InterPro"/>
</dbReference>
<dbReference type="GO" id="GO:0006412">
    <property type="term" value="P:translation"/>
    <property type="evidence" value="ECO:0007669"/>
    <property type="project" value="UniProtKB-UniRule"/>
</dbReference>
<dbReference type="CDD" id="cd00337">
    <property type="entry name" value="Ribosomal_uL14"/>
    <property type="match status" value="1"/>
</dbReference>
<dbReference type="FunFam" id="2.40.150.20:FF:000001">
    <property type="entry name" value="50S ribosomal protein L14"/>
    <property type="match status" value="1"/>
</dbReference>
<dbReference type="Gene3D" id="2.40.150.20">
    <property type="entry name" value="Ribosomal protein L14"/>
    <property type="match status" value="1"/>
</dbReference>
<dbReference type="HAMAP" id="MF_01367">
    <property type="entry name" value="Ribosomal_uL14"/>
    <property type="match status" value="1"/>
</dbReference>
<dbReference type="InterPro" id="IPR000218">
    <property type="entry name" value="Ribosomal_uL14"/>
</dbReference>
<dbReference type="InterPro" id="IPR005745">
    <property type="entry name" value="Ribosomal_uL14_bac-type"/>
</dbReference>
<dbReference type="InterPro" id="IPR019972">
    <property type="entry name" value="Ribosomal_uL14_CS"/>
</dbReference>
<dbReference type="InterPro" id="IPR036853">
    <property type="entry name" value="Ribosomal_uL14_sf"/>
</dbReference>
<dbReference type="NCBIfam" id="TIGR01067">
    <property type="entry name" value="rplN_bact"/>
    <property type="match status" value="1"/>
</dbReference>
<dbReference type="PANTHER" id="PTHR11761">
    <property type="entry name" value="50S/60S RIBOSOMAL PROTEIN L14/L23"/>
    <property type="match status" value="1"/>
</dbReference>
<dbReference type="PANTHER" id="PTHR11761:SF3">
    <property type="entry name" value="LARGE RIBOSOMAL SUBUNIT PROTEIN UL14M"/>
    <property type="match status" value="1"/>
</dbReference>
<dbReference type="Pfam" id="PF00238">
    <property type="entry name" value="Ribosomal_L14"/>
    <property type="match status" value="1"/>
</dbReference>
<dbReference type="SMART" id="SM01374">
    <property type="entry name" value="Ribosomal_L14"/>
    <property type="match status" value="1"/>
</dbReference>
<dbReference type="SUPFAM" id="SSF50193">
    <property type="entry name" value="Ribosomal protein L14"/>
    <property type="match status" value="1"/>
</dbReference>
<dbReference type="PROSITE" id="PS00049">
    <property type="entry name" value="RIBOSOMAL_L14"/>
    <property type="match status" value="1"/>
</dbReference>
<feature type="chain" id="PRO_1000214986" description="Large ribosomal subunit protein uL14">
    <location>
        <begin position="1"/>
        <end position="122"/>
    </location>
</feature>
<name>RL14_MICLC</name>
<sequence length="122" mass="13261">MIQQESRLKVADNTGAKEILTIRVLGGSGRRYAGIGDTIVATVKDAIPGGNVKKGDVVKAVVVRTRKQSRRPDGSYIKFDENAAVILKTDGEPRGTRIFGPVGRELRDKKFMKIVSLAPEVI</sequence>
<organism>
    <name type="scientific">Micrococcus luteus (strain ATCC 4698 / DSM 20030 / JCM 1464 / CCM 169 / CCUG 5858 / IAM 1056 / NBRC 3333 / NCIMB 9278 / NCTC 2665 / VKM Ac-2230)</name>
    <name type="common">Micrococcus lysodeikticus</name>
    <dbReference type="NCBI Taxonomy" id="465515"/>
    <lineage>
        <taxon>Bacteria</taxon>
        <taxon>Bacillati</taxon>
        <taxon>Actinomycetota</taxon>
        <taxon>Actinomycetes</taxon>
        <taxon>Micrococcales</taxon>
        <taxon>Micrococcaceae</taxon>
        <taxon>Micrococcus</taxon>
    </lineage>
</organism>
<protein>
    <recommendedName>
        <fullName evidence="1">Large ribosomal subunit protein uL14</fullName>
    </recommendedName>
    <alternativeName>
        <fullName evidence="2">50S ribosomal protein L14</fullName>
    </alternativeName>
</protein>
<proteinExistence type="inferred from homology"/>
<comment type="function">
    <text evidence="1">Binds to 23S rRNA. Forms part of two intersubunit bridges in the 70S ribosome.</text>
</comment>
<comment type="subunit">
    <text evidence="1">Part of the 50S ribosomal subunit. Forms a cluster with proteins L3 and L19. In the 70S ribosome, L14 and L19 interact and together make contacts with the 16S rRNA in bridges B5 and B8.</text>
</comment>
<comment type="similarity">
    <text evidence="1">Belongs to the universal ribosomal protein uL14 family.</text>
</comment>
<accession>C5CC52</accession>
<gene>
    <name evidence="1" type="primary">rplN</name>
    <name type="ordered locus">Mlut_17060</name>
</gene>
<keyword id="KW-1185">Reference proteome</keyword>
<keyword id="KW-0687">Ribonucleoprotein</keyword>
<keyword id="KW-0689">Ribosomal protein</keyword>
<keyword id="KW-0694">RNA-binding</keyword>
<keyword id="KW-0699">rRNA-binding</keyword>
<evidence type="ECO:0000255" key="1">
    <source>
        <dbReference type="HAMAP-Rule" id="MF_01367"/>
    </source>
</evidence>
<evidence type="ECO:0000305" key="2"/>
<reference key="1">
    <citation type="journal article" date="2010" name="J. Bacteriol.">
        <title>Genome sequence of the Fleming strain of Micrococcus luteus, a simple free-living actinobacterium.</title>
        <authorList>
            <person name="Young M."/>
            <person name="Artsatbanov V."/>
            <person name="Beller H.R."/>
            <person name="Chandra G."/>
            <person name="Chater K.F."/>
            <person name="Dover L.G."/>
            <person name="Goh E.B."/>
            <person name="Kahan T."/>
            <person name="Kaprelyants A.S."/>
            <person name="Kyrpides N."/>
            <person name="Lapidus A."/>
            <person name="Lowry S.R."/>
            <person name="Lykidis A."/>
            <person name="Mahillon J."/>
            <person name="Markowitz V."/>
            <person name="Mavromatis K."/>
            <person name="Mukamolova G.V."/>
            <person name="Oren A."/>
            <person name="Rokem J.S."/>
            <person name="Smith M.C."/>
            <person name="Young D.I."/>
            <person name="Greenblatt C.L."/>
        </authorList>
    </citation>
    <scope>NUCLEOTIDE SEQUENCE [LARGE SCALE GENOMIC DNA]</scope>
    <source>
        <strain>ATCC 4698 / DSM 20030 / JCM 1464 / CCM 169 / CCUG 5858 / IAM 1056 / NBRC 3333 / NCIMB 9278 / NCTC 2665 / VKM Ac-2230</strain>
    </source>
</reference>